<accession>P34409</accession>
<accession>A8WFE8</accession>
<accession>A8WFE9</accession>
<comment type="function">
    <text evidence="1">DNA polymerase specifically involved in DNA repair. Plays an important role in translesion synthesis, where the normal high-fidelity DNA polymerases cannot proceed and DNA synthesis stalls. Depending on the context, it inserts the correct base, but causes frequent base transitions, transversions and frameshifts. Lacks 3'-5' proofreading exonuclease activity. Forms a Schiff base with 5'-deoxyribose phosphate at abasic sites, but does not have lyase activity (By similarity).</text>
</comment>
<comment type="catalytic activity">
    <reaction>
        <text>DNA(n) + a 2'-deoxyribonucleoside 5'-triphosphate = DNA(n+1) + diphosphate</text>
        <dbReference type="Rhea" id="RHEA:22508"/>
        <dbReference type="Rhea" id="RHEA-COMP:17339"/>
        <dbReference type="Rhea" id="RHEA-COMP:17340"/>
        <dbReference type="ChEBI" id="CHEBI:33019"/>
        <dbReference type="ChEBI" id="CHEBI:61560"/>
        <dbReference type="ChEBI" id="CHEBI:173112"/>
        <dbReference type="EC" id="2.7.7.7"/>
    </reaction>
</comment>
<comment type="cofactor">
    <cofactor evidence="1">
        <name>Mg(2+)</name>
        <dbReference type="ChEBI" id="CHEBI:18420"/>
    </cofactor>
    <cofactor evidence="1">
        <name>Mn(2+)</name>
        <dbReference type="ChEBI" id="CHEBI:29035"/>
    </cofactor>
    <text evidence="1">Divalent metal cations. Prefers Mg(2+), but can also use Mn(2+).</text>
</comment>
<comment type="subcellular location">
    <subcellularLocation>
        <location evidence="1">Nucleus</location>
    </subcellularLocation>
</comment>
<comment type="alternative products">
    <event type="alternative splicing"/>
    <isoform>
        <id>P34409-1</id>
        <name>a</name>
        <sequence type="displayed"/>
    </isoform>
    <isoform>
        <id>P34409-2</id>
        <name>b</name>
        <sequence type="described" ref="VSP_032729"/>
    </isoform>
</comment>
<comment type="domain">
    <text evidence="1">The catalytic core consists of fingers, palm and thumb subdomains, but the fingers and thumb subdomains are much smaller than in high-fidelity polymerases; residues from five sequence motifs of the Y-family cluster around an active site cleft that can accommodate DNA and nucleotide substrates with relaxed geometric constraints, with consequently higher rates of misincorporation and low processivity.</text>
</comment>
<comment type="similarity">
    <text evidence="5">Belongs to the DNA polymerase type-Y family.</text>
</comment>
<keyword id="KW-0025">Alternative splicing</keyword>
<keyword id="KW-0227">DNA damage</keyword>
<keyword id="KW-0234">DNA repair</keyword>
<keyword id="KW-0235">DNA replication</keyword>
<keyword id="KW-0237">DNA synthesis</keyword>
<keyword id="KW-0239">DNA-directed DNA polymerase</keyword>
<keyword id="KW-0460">Magnesium</keyword>
<keyword id="KW-0479">Metal-binding</keyword>
<keyword id="KW-0515">Mutator protein</keyword>
<keyword id="KW-0548">Nucleotidyltransferase</keyword>
<keyword id="KW-0539">Nucleus</keyword>
<keyword id="KW-1185">Reference proteome</keyword>
<keyword id="KW-0704">Schiff base</keyword>
<keyword id="KW-0808">Transferase</keyword>
<keyword id="KW-0862">Zinc</keyword>
<keyword id="KW-0863">Zinc-finger</keyword>
<name>POLK_CAEEL</name>
<evidence type="ECO:0000250" key="1"/>
<evidence type="ECO:0000255" key="2">
    <source>
        <dbReference type="PROSITE-ProRule" id="PRU00216"/>
    </source>
</evidence>
<evidence type="ECO:0000255" key="3">
    <source>
        <dbReference type="PROSITE-ProRule" id="PRU01256"/>
    </source>
</evidence>
<evidence type="ECO:0000256" key="4">
    <source>
        <dbReference type="SAM" id="MobiDB-lite"/>
    </source>
</evidence>
<evidence type="ECO:0000305" key="5"/>
<proteinExistence type="inferred from homology"/>
<gene>
    <name type="primary">polk-1</name>
    <name type="ORF">F22B7.6</name>
</gene>
<sequence>MLTFNDNKAGMNGLDKEKITKVIEENTSASYSSFSKKQQSRIEEKVLEIKNRLQTATREERQKSEILMENLEMKLESSRDLSRDCVCIDMDAYFAAVEMRDNPALRTVPMAVGSSAMLSTSNYLARRFGVRAGMPGFISNKLCPSLTIVPGNYPKYTKVSRQFSQIFMEYDSDVGMMSLDEAFIDLTDYVASNTEKKTFKRHRFGGDCPCWLPRFDENENTLEDLKIEESICPKCEKSRKIYYDHVEFGTGREEAVREIRFRVEQLTGLTCSAGIASNFMLAKICSDLNKPNGQYVLENDKNAIMEFLKDLPIRKVGGIGRVCEAQLKAMDIQTVGDMNLKKNLYPLCFTPLSQESFLRTALGLPGRPSESDPRRKSISVERTFSPTSDFNILLEEHQEICRMLEEDVRKSGIVGGKTVTLKLKLSSFDVLTRSLTPSDVVKSLEDIQKFSLELLEKEKGKEIRLLGVRLSQLIFEEDEKKRSKTITEFWNEKKLQIQNLQGSENVDDDDVIMMDTRPCPICGTDVENRLDVMNCHVDECILKVQNDDGPELICVSVENKSTQKPERPSTKKRKLQEKRPKAKKMVTIDSFWKKSG</sequence>
<reference key="1">
    <citation type="journal article" date="1994" name="Nature">
        <title>2.2 Mb of contiguous nucleotide sequence from chromosome III of C. elegans.</title>
        <authorList>
            <person name="Wilson R."/>
            <person name="Ainscough R."/>
            <person name="Anderson K."/>
            <person name="Baynes C."/>
            <person name="Berks M."/>
            <person name="Bonfield J."/>
            <person name="Burton J."/>
            <person name="Connell M."/>
            <person name="Copsey T."/>
            <person name="Cooper J."/>
            <person name="Coulson A."/>
            <person name="Craxton M."/>
            <person name="Dear S."/>
            <person name="Du Z."/>
            <person name="Durbin R."/>
            <person name="Favello A."/>
            <person name="Fraser A."/>
            <person name="Fulton L."/>
            <person name="Gardner A."/>
            <person name="Green P."/>
            <person name="Hawkins T."/>
            <person name="Hillier L."/>
            <person name="Jier M."/>
            <person name="Johnston L."/>
            <person name="Jones M."/>
            <person name="Kershaw J."/>
            <person name="Kirsten J."/>
            <person name="Laisster N."/>
            <person name="Latreille P."/>
            <person name="Lightning J."/>
            <person name="Lloyd C."/>
            <person name="Mortimore B."/>
            <person name="O'Callaghan M."/>
            <person name="Parsons J."/>
            <person name="Percy C."/>
            <person name="Rifken L."/>
            <person name="Roopra A."/>
            <person name="Saunders D."/>
            <person name="Shownkeen R."/>
            <person name="Sims M."/>
            <person name="Smaldon N."/>
            <person name="Smith A."/>
            <person name="Smith M."/>
            <person name="Sonnhammer E."/>
            <person name="Staden R."/>
            <person name="Sulston J."/>
            <person name="Thierry-Mieg J."/>
            <person name="Thomas K."/>
            <person name="Vaudin M."/>
            <person name="Vaughan K."/>
            <person name="Waterston R."/>
            <person name="Watson A."/>
            <person name="Weinstock L."/>
            <person name="Wilkinson-Sproat J."/>
            <person name="Wohldman P."/>
        </authorList>
    </citation>
    <scope>NUCLEOTIDE SEQUENCE [LARGE SCALE GENOMIC DNA]</scope>
    <source>
        <strain>Bristol N2</strain>
    </source>
</reference>
<reference key="2">
    <citation type="journal article" date="1998" name="Science">
        <title>Genome sequence of the nematode C. elegans: a platform for investigating biology.</title>
        <authorList>
            <consortium name="The C. elegans sequencing consortium"/>
        </authorList>
    </citation>
    <scope>NUCLEOTIDE SEQUENCE [LARGE SCALE GENOMIC DNA]</scope>
    <scope>ALTERNATIVE SPLICING</scope>
    <source>
        <strain>Bristol N2</strain>
    </source>
</reference>
<organism>
    <name type="scientific">Caenorhabditis elegans</name>
    <dbReference type="NCBI Taxonomy" id="6239"/>
    <lineage>
        <taxon>Eukaryota</taxon>
        <taxon>Metazoa</taxon>
        <taxon>Ecdysozoa</taxon>
        <taxon>Nematoda</taxon>
        <taxon>Chromadorea</taxon>
        <taxon>Rhabditida</taxon>
        <taxon>Rhabditina</taxon>
        <taxon>Rhabditomorpha</taxon>
        <taxon>Rhabditoidea</taxon>
        <taxon>Rhabditidae</taxon>
        <taxon>Peloderinae</taxon>
        <taxon>Caenorhabditis</taxon>
    </lineage>
</organism>
<protein>
    <recommendedName>
        <fullName>DNA polymerase kappa</fullName>
        <ecNumber>2.7.7.7</ecNumber>
    </recommendedName>
</protein>
<dbReference type="EC" id="2.7.7.7"/>
<dbReference type="EMBL" id="FO080222">
    <property type="protein sequence ID" value="CCD62142.1"/>
    <property type="molecule type" value="Genomic_DNA"/>
</dbReference>
<dbReference type="EMBL" id="FO080222">
    <property type="protein sequence ID" value="CCD62143.1"/>
    <property type="molecule type" value="Genomic_DNA"/>
</dbReference>
<dbReference type="PIR" id="S44637">
    <property type="entry name" value="S44637"/>
</dbReference>
<dbReference type="RefSeq" id="NP_001122692.1">
    <molecule id="P34409-1"/>
    <property type="nucleotide sequence ID" value="NM_001129220.3"/>
</dbReference>
<dbReference type="RefSeq" id="NP_001122693.1">
    <property type="nucleotide sequence ID" value="NM_001129221.3"/>
</dbReference>
<dbReference type="RefSeq" id="NP_001379588.1">
    <molecule id="P34409-2"/>
    <property type="nucleotide sequence ID" value="NM_001392159.1"/>
</dbReference>
<dbReference type="SMR" id="P34409"/>
<dbReference type="FunCoup" id="P34409">
    <property type="interactions" value="2788"/>
</dbReference>
<dbReference type="STRING" id="6239.F22B7.6a.1"/>
<dbReference type="PaxDb" id="6239-F22B7.6a"/>
<dbReference type="EnsemblMetazoa" id="F22B7.6a.1">
    <molecule id="P34409-1"/>
    <property type="protein sequence ID" value="F22B7.6a.1"/>
    <property type="gene ID" value="WBGene00017696"/>
</dbReference>
<dbReference type="EnsemblMetazoa" id="F22B7.6b.1">
    <molecule id="P34409-2"/>
    <property type="protein sequence ID" value="F22B7.6b.1"/>
    <property type="gene ID" value="WBGene00017696"/>
</dbReference>
<dbReference type="EnsemblMetazoa" id="F22B7.6b.2">
    <molecule id="P34409-2"/>
    <property type="protein sequence ID" value="F22B7.6b.2"/>
    <property type="gene ID" value="WBGene00017696"/>
</dbReference>
<dbReference type="GeneID" id="176209"/>
<dbReference type="KEGG" id="cel:CELE_F22B7.6"/>
<dbReference type="UCSC" id="F22B7.6b.2">
    <molecule id="P34409-1"/>
    <property type="organism name" value="c. elegans"/>
</dbReference>
<dbReference type="AGR" id="WB:WBGene00017696"/>
<dbReference type="CTD" id="176209"/>
<dbReference type="WormBase" id="F22B7.6a">
    <molecule id="P34409-1"/>
    <property type="protein sequence ID" value="CE41638"/>
    <property type="gene ID" value="WBGene00017696"/>
    <property type="gene designation" value="polk-1"/>
</dbReference>
<dbReference type="WormBase" id="F22B7.6b">
    <molecule id="P34409-2"/>
    <property type="protein sequence ID" value="CE41639"/>
    <property type="gene ID" value="WBGene00017696"/>
    <property type="gene designation" value="polk-1"/>
</dbReference>
<dbReference type="eggNOG" id="KOG2094">
    <property type="taxonomic scope" value="Eukaryota"/>
</dbReference>
<dbReference type="GeneTree" id="ENSGT00940000156667"/>
<dbReference type="HOGENOM" id="CLU_012348_11_4_1"/>
<dbReference type="InParanoid" id="P34409"/>
<dbReference type="OMA" id="EVYTRQV"/>
<dbReference type="OrthoDB" id="1747274at2759"/>
<dbReference type="PhylomeDB" id="P34409"/>
<dbReference type="Reactome" id="R-CEL-5655862">
    <property type="pathway name" value="Translesion synthesis by POLK"/>
</dbReference>
<dbReference type="Reactome" id="R-CEL-5696397">
    <property type="pathway name" value="Gap-filling DNA repair synthesis and ligation in GG-NER"/>
</dbReference>
<dbReference type="Reactome" id="R-CEL-5696400">
    <property type="pathway name" value="Dual Incision in GG-NER"/>
</dbReference>
<dbReference type="Reactome" id="R-CEL-6782135">
    <property type="pathway name" value="Dual incision in TC-NER"/>
</dbReference>
<dbReference type="Reactome" id="R-CEL-6782210">
    <property type="pathway name" value="Gap-filling DNA repair synthesis and ligation in TC-NER"/>
</dbReference>
<dbReference type="PRO" id="PR:P34409"/>
<dbReference type="Proteomes" id="UP000001940">
    <property type="component" value="Chromosome III"/>
</dbReference>
<dbReference type="Bgee" id="WBGene00017696">
    <property type="expression patterns" value="Expressed in germ line (C elegans) and 4 other cell types or tissues"/>
</dbReference>
<dbReference type="GO" id="GO:0005634">
    <property type="term" value="C:nucleus"/>
    <property type="evidence" value="ECO:0000318"/>
    <property type="project" value="GO_Central"/>
</dbReference>
<dbReference type="GO" id="GO:0003684">
    <property type="term" value="F:damaged DNA binding"/>
    <property type="evidence" value="ECO:0007669"/>
    <property type="project" value="InterPro"/>
</dbReference>
<dbReference type="GO" id="GO:0003887">
    <property type="term" value="F:DNA-directed DNA polymerase activity"/>
    <property type="evidence" value="ECO:0000318"/>
    <property type="project" value="GO_Central"/>
</dbReference>
<dbReference type="GO" id="GO:0008270">
    <property type="term" value="F:zinc ion binding"/>
    <property type="evidence" value="ECO:0007669"/>
    <property type="project" value="UniProtKB-KW"/>
</dbReference>
<dbReference type="GO" id="GO:0006260">
    <property type="term" value="P:DNA replication"/>
    <property type="evidence" value="ECO:0007669"/>
    <property type="project" value="UniProtKB-KW"/>
</dbReference>
<dbReference type="GO" id="GO:0009792">
    <property type="term" value="P:embryo development ending in birth or egg hatching"/>
    <property type="evidence" value="ECO:0000316"/>
    <property type="project" value="WormBase"/>
</dbReference>
<dbReference type="GO" id="GO:0042276">
    <property type="term" value="P:error-prone translesion synthesis"/>
    <property type="evidence" value="ECO:0000315"/>
    <property type="project" value="WormBase"/>
</dbReference>
<dbReference type="GO" id="GO:0022414">
    <property type="term" value="P:reproductive process"/>
    <property type="evidence" value="ECO:0000316"/>
    <property type="project" value="WormBase"/>
</dbReference>
<dbReference type="GO" id="GO:0019985">
    <property type="term" value="P:translesion synthesis"/>
    <property type="evidence" value="ECO:0000315"/>
    <property type="project" value="WormBase"/>
</dbReference>
<dbReference type="CDD" id="cd03586">
    <property type="entry name" value="PolY_Pol_IV_kappa"/>
    <property type="match status" value="1"/>
</dbReference>
<dbReference type="FunFam" id="3.30.1490.100:FF:000004">
    <property type="entry name" value="DNA polymerase IV"/>
    <property type="match status" value="1"/>
</dbReference>
<dbReference type="FunFam" id="3.40.1170.60:FF:000024">
    <property type="entry name" value="DNA polymerase kappa"/>
    <property type="match status" value="1"/>
</dbReference>
<dbReference type="Gene3D" id="1.10.150.810">
    <property type="match status" value="1"/>
</dbReference>
<dbReference type="Gene3D" id="3.30.70.270">
    <property type="match status" value="1"/>
</dbReference>
<dbReference type="Gene3D" id="3.40.1170.60">
    <property type="match status" value="1"/>
</dbReference>
<dbReference type="Gene3D" id="1.10.150.20">
    <property type="entry name" value="5' to 3' exonuclease, C-terminal subdomain"/>
    <property type="match status" value="1"/>
</dbReference>
<dbReference type="Gene3D" id="3.30.1490.100">
    <property type="entry name" value="DNA polymerase, Y-family, little finger domain"/>
    <property type="match status" value="1"/>
</dbReference>
<dbReference type="InterPro" id="IPR043502">
    <property type="entry name" value="DNA/RNA_pol_sf"/>
</dbReference>
<dbReference type="InterPro" id="IPR036775">
    <property type="entry name" value="DNA_pol_Y-fam_lit_finger_sf"/>
</dbReference>
<dbReference type="InterPro" id="IPR017961">
    <property type="entry name" value="DNA_pol_Y-fam_little_finger"/>
</dbReference>
<dbReference type="InterPro" id="IPR050116">
    <property type="entry name" value="DNA_polymerase-Y"/>
</dbReference>
<dbReference type="InterPro" id="IPR022880">
    <property type="entry name" value="DNApol_IV"/>
</dbReference>
<dbReference type="InterPro" id="IPR024728">
    <property type="entry name" value="PolY_HhH_motif"/>
</dbReference>
<dbReference type="InterPro" id="IPR006642">
    <property type="entry name" value="Rad18_UBZ4"/>
</dbReference>
<dbReference type="InterPro" id="IPR043128">
    <property type="entry name" value="Rev_trsase/Diguanyl_cyclase"/>
</dbReference>
<dbReference type="InterPro" id="IPR001126">
    <property type="entry name" value="UmuC"/>
</dbReference>
<dbReference type="PANTHER" id="PTHR11076:SF33">
    <property type="entry name" value="DNA POLYMERASE KAPPA"/>
    <property type="match status" value="1"/>
</dbReference>
<dbReference type="PANTHER" id="PTHR11076">
    <property type="entry name" value="DNA REPAIR POLYMERASE UMUC / TRANSFERASE FAMILY MEMBER"/>
    <property type="match status" value="1"/>
</dbReference>
<dbReference type="Pfam" id="PF00817">
    <property type="entry name" value="IMS"/>
    <property type="match status" value="1"/>
</dbReference>
<dbReference type="Pfam" id="PF11799">
    <property type="entry name" value="IMS_C"/>
    <property type="match status" value="1"/>
</dbReference>
<dbReference type="Pfam" id="PF11798">
    <property type="entry name" value="IMS_HHH"/>
    <property type="match status" value="1"/>
</dbReference>
<dbReference type="SUPFAM" id="SSF56672">
    <property type="entry name" value="DNA/RNA polymerases"/>
    <property type="match status" value="1"/>
</dbReference>
<dbReference type="SUPFAM" id="SSF100879">
    <property type="entry name" value="Lesion bypass DNA polymerase (Y-family), little finger domain"/>
    <property type="match status" value="1"/>
</dbReference>
<dbReference type="PROSITE" id="PS50173">
    <property type="entry name" value="UMUC"/>
    <property type="match status" value="1"/>
</dbReference>
<dbReference type="PROSITE" id="PS51908">
    <property type="entry name" value="ZF_UBZ4"/>
    <property type="match status" value="1"/>
</dbReference>
<feature type="chain" id="PRO_0000173996" description="DNA polymerase kappa">
    <location>
        <begin position="1"/>
        <end position="596"/>
    </location>
</feature>
<feature type="domain" description="UmuC" evidence="2">
    <location>
        <begin position="85"/>
        <end position="320"/>
    </location>
</feature>
<feature type="zinc finger region" description="UBZ4-type" evidence="3">
    <location>
        <begin position="516"/>
        <end position="545"/>
    </location>
</feature>
<feature type="region of interest" description="Disordered" evidence="4">
    <location>
        <begin position="559"/>
        <end position="584"/>
    </location>
</feature>
<feature type="compositionally biased region" description="Basic residues" evidence="4">
    <location>
        <begin position="570"/>
        <end position="584"/>
    </location>
</feature>
<feature type="active site" evidence="2">
    <location>
        <position position="181"/>
    </location>
</feature>
<feature type="binding site" evidence="2">
    <location>
        <position position="89"/>
    </location>
    <ligand>
        <name>Mg(2+)</name>
        <dbReference type="ChEBI" id="CHEBI:18420"/>
    </ligand>
</feature>
<feature type="binding site" evidence="2">
    <location>
        <position position="180"/>
    </location>
    <ligand>
        <name>Mg(2+)</name>
        <dbReference type="ChEBI" id="CHEBI:18420"/>
    </ligand>
</feature>
<feature type="binding site" evidence="3">
    <location>
        <position position="519"/>
    </location>
    <ligand>
        <name>Zn(2+)</name>
        <dbReference type="ChEBI" id="CHEBI:29105"/>
    </ligand>
</feature>
<feature type="binding site" evidence="3">
    <location>
        <position position="522"/>
    </location>
    <ligand>
        <name>Zn(2+)</name>
        <dbReference type="ChEBI" id="CHEBI:29105"/>
    </ligand>
</feature>
<feature type="binding site" evidence="3">
    <location>
        <position position="536"/>
    </location>
    <ligand>
        <name>Zn(2+)</name>
        <dbReference type="ChEBI" id="CHEBI:29105"/>
    </ligand>
</feature>
<feature type="binding site" evidence="3">
    <location>
        <position position="540"/>
    </location>
    <ligand>
        <name>Zn(2+)</name>
        <dbReference type="ChEBI" id="CHEBI:29105"/>
    </ligand>
</feature>
<feature type="site" description="Substrate discrimination" evidence="2">
    <location>
        <position position="94"/>
    </location>
</feature>
<feature type="splice variant" id="VSP_032729" description="In isoform b." evidence="5">
    <location>
        <begin position="1"/>
        <end position="133"/>
    </location>
</feature>